<protein>
    <recommendedName>
        <fullName>Uncharacterized 19.2 kDa protein in cox-rep intergenic region</fullName>
    </recommendedName>
    <alternativeName>
        <fullName>ORF21</fullName>
    </alternativeName>
    <alternativeName>
        <fullName>ORF5</fullName>
    </alternativeName>
</protein>
<dbReference type="EMBL" id="U24159">
    <property type="protein sequence ID" value="AAB09189.1"/>
    <property type="molecule type" value="Genomic_DNA"/>
</dbReference>
<dbReference type="PIR" id="S72336">
    <property type="entry name" value="S72336"/>
</dbReference>
<dbReference type="RefSeq" id="NP_043473.1">
    <property type="nucleotide sequence ID" value="NC_001697.1"/>
</dbReference>
<dbReference type="GeneID" id="1261122"/>
<dbReference type="KEGG" id="vg:1261122"/>
<dbReference type="Proteomes" id="UP000001713">
    <property type="component" value="Segment"/>
</dbReference>
<name>YO05_BPHC1</name>
<proteinExistence type="predicted"/>
<evidence type="ECO:0000256" key="1">
    <source>
        <dbReference type="SAM" id="MobiDB-lite"/>
    </source>
</evidence>
<organismHost>
    <name type="scientific">Haemophilus influenzae</name>
    <dbReference type="NCBI Taxonomy" id="727"/>
</organismHost>
<accession>P51706</accession>
<keyword id="KW-1185">Reference proteome</keyword>
<sequence length="167" mass="19166">MTKSSFTFFFQEYCEKHNLTNEEIQERFAILQYQAEVERDTTQDHQQLSAIFAKWRENCPRKQANNDETTSQYTGAEHQAIRDLFASLKQSAREAHSLHHQSHQSDVQVHAKGNPSRVLEAPAVTEVDKAVLAYLEAFFASDRSSSEILKLSNRLFNLGQAYNKTAK</sequence>
<organism>
    <name type="scientific">Haemophilus phage HP1 (strain HP1c1)</name>
    <name type="common">Bacteriophage HP1</name>
    <dbReference type="NCBI Taxonomy" id="1289570"/>
    <lineage>
        <taxon>Viruses</taxon>
        <taxon>Duplodnaviria</taxon>
        <taxon>Heunggongvirae</taxon>
        <taxon>Uroviricota</taxon>
        <taxon>Caudoviricetes</taxon>
        <taxon>Peduoviridae</taxon>
        <taxon>Hpunavirus</taxon>
        <taxon>Haemophilus phage HP1</taxon>
    </lineage>
</organism>
<feature type="chain" id="PRO_0000165319" description="Uncharacterized 19.2 kDa protein in cox-rep intergenic region">
    <location>
        <begin position="1"/>
        <end position="167"/>
    </location>
</feature>
<feature type="region of interest" description="Disordered" evidence="1">
    <location>
        <begin position="95"/>
        <end position="114"/>
    </location>
</feature>
<reference key="1">
    <citation type="journal article" date="1994" name="Mol. Microbiol.">
        <title>Identification of an HP1 phage protein required for site-specific excision.</title>
        <authorList>
            <person name="Esposito D."/>
            <person name="Scocca J.J."/>
        </authorList>
    </citation>
    <scope>NUCLEOTIDE SEQUENCE [GENOMIC DNA]</scope>
</reference>
<reference key="2">
    <citation type="journal article" date="1996" name="Nucleic Acids Res.">
        <title>The complete nucleotide sequence of bacteriophage HP1 DNA.</title>
        <authorList>
            <person name="Esposito D."/>
            <person name="Fitzmaurice W.P."/>
            <person name="Benjamin R.C."/>
            <person name="Goodman S.D."/>
            <person name="Waldman A.S."/>
            <person name="Scocca J.J."/>
        </authorList>
    </citation>
    <scope>NUCLEOTIDE SEQUENCE [LARGE SCALE GENOMIC DNA]</scope>
</reference>